<protein>
    <recommendedName>
        <fullName>Uncharacterized protein MW1862</fullName>
    </recommendedName>
</protein>
<proteinExistence type="inferred from homology"/>
<comment type="similarity">
    <text evidence="1">Belongs to the cycloisomerase 2 family.</text>
</comment>
<gene>
    <name type="ordered locus">MW1862</name>
</gene>
<evidence type="ECO:0000305" key="1"/>
<name>Y1862_STAAW</name>
<feature type="chain" id="PRO_0000298653" description="Uncharacterized protein MW1862">
    <location>
        <begin position="1"/>
        <end position="342"/>
    </location>
</feature>
<dbReference type="EMBL" id="BA000033">
    <property type="protein sequence ID" value="BAB95727.1"/>
    <property type="molecule type" value="Genomic_DNA"/>
</dbReference>
<dbReference type="RefSeq" id="WP_000181322.1">
    <property type="nucleotide sequence ID" value="NC_003923.1"/>
</dbReference>
<dbReference type="SMR" id="Q8NVS2"/>
<dbReference type="KEGG" id="sam:MW1862"/>
<dbReference type="HOGENOM" id="CLU_038716_3_0_9"/>
<dbReference type="GO" id="GO:0005829">
    <property type="term" value="C:cytosol"/>
    <property type="evidence" value="ECO:0007669"/>
    <property type="project" value="TreeGrafter"/>
</dbReference>
<dbReference type="GO" id="GO:0017057">
    <property type="term" value="F:6-phosphogluconolactonase activity"/>
    <property type="evidence" value="ECO:0007669"/>
    <property type="project" value="TreeGrafter"/>
</dbReference>
<dbReference type="FunFam" id="2.130.10.10:FF:000822">
    <property type="entry name" value="3-carboxy-cis,cis-muconate lactonizing enzyme"/>
    <property type="match status" value="1"/>
</dbReference>
<dbReference type="Gene3D" id="2.130.10.10">
    <property type="entry name" value="YVTN repeat-like/Quinoprotein amine dehydrogenase"/>
    <property type="match status" value="1"/>
</dbReference>
<dbReference type="InterPro" id="IPR050282">
    <property type="entry name" value="Cycloisomerase_2"/>
</dbReference>
<dbReference type="InterPro" id="IPR019405">
    <property type="entry name" value="Lactonase_7-beta_prop"/>
</dbReference>
<dbReference type="InterPro" id="IPR011045">
    <property type="entry name" value="N2O_reductase_N"/>
</dbReference>
<dbReference type="InterPro" id="IPR015943">
    <property type="entry name" value="WD40/YVTN_repeat-like_dom_sf"/>
</dbReference>
<dbReference type="PANTHER" id="PTHR30344:SF1">
    <property type="entry name" value="6-PHOSPHOGLUCONOLACTONASE"/>
    <property type="match status" value="1"/>
</dbReference>
<dbReference type="PANTHER" id="PTHR30344">
    <property type="entry name" value="6-PHOSPHOGLUCONOLACTONASE-RELATED"/>
    <property type="match status" value="1"/>
</dbReference>
<dbReference type="Pfam" id="PF10282">
    <property type="entry name" value="Lactonase"/>
    <property type="match status" value="1"/>
</dbReference>
<dbReference type="SUPFAM" id="SSF50974">
    <property type="entry name" value="Nitrous oxide reductase, N-terminal domain"/>
    <property type="match status" value="1"/>
</dbReference>
<reference key="1">
    <citation type="journal article" date="2002" name="Lancet">
        <title>Genome and virulence determinants of high virulence community-acquired MRSA.</title>
        <authorList>
            <person name="Baba T."/>
            <person name="Takeuchi F."/>
            <person name="Kuroda M."/>
            <person name="Yuzawa H."/>
            <person name="Aoki K."/>
            <person name="Oguchi A."/>
            <person name="Nagai Y."/>
            <person name="Iwama N."/>
            <person name="Asano K."/>
            <person name="Naimi T."/>
            <person name="Kuroda H."/>
            <person name="Cui L."/>
            <person name="Yamamoto K."/>
            <person name="Hiramatsu K."/>
        </authorList>
    </citation>
    <scope>NUCLEOTIDE SEQUENCE [LARGE SCALE GENOMIC DNA]</scope>
    <source>
        <strain>MW2</strain>
    </source>
</reference>
<sequence length="342" mass="38547">MTNGYIGSYTKKNGKGIYRFELNENQSRIDLLETGFELEASTYLVRNNEVLYGINKEGEQCGVASLKIDDNGELHLLNKCLSSKAGTGCYVSISEDKRYLFEAVYGAGIIRMYELNTHTGEIIRLIQELAHDFPTGTHERQDHPHAHYINQTPDGKYVAVTDLGADRIVTYKFDDNGFEFYKESLFKDSDGTRHIEFHDNGKFAYVVHELSNTVSVAEYNDGKFEELERHLTIPENFDGDTKLAAVRLSHDQQFLYVSNRGHDSIAIFKVLDNGQHLELVTITESGGQFPRDFNIASSDDLLVCAHEQGDSVVTVFERNKETGKITLCDNTRVASEGVCVIF</sequence>
<organism>
    <name type="scientific">Staphylococcus aureus (strain MW2)</name>
    <dbReference type="NCBI Taxonomy" id="196620"/>
    <lineage>
        <taxon>Bacteria</taxon>
        <taxon>Bacillati</taxon>
        <taxon>Bacillota</taxon>
        <taxon>Bacilli</taxon>
        <taxon>Bacillales</taxon>
        <taxon>Staphylococcaceae</taxon>
        <taxon>Staphylococcus</taxon>
    </lineage>
</organism>
<accession>Q8NVS2</accession>